<organism>
    <name type="scientific">Burkholderia vietnamiensis</name>
    <dbReference type="NCBI Taxonomy" id="60552"/>
    <lineage>
        <taxon>Bacteria</taxon>
        <taxon>Pseudomonadati</taxon>
        <taxon>Pseudomonadota</taxon>
        <taxon>Betaproteobacteria</taxon>
        <taxon>Burkholderiales</taxon>
        <taxon>Burkholderiaceae</taxon>
        <taxon>Burkholderia</taxon>
        <taxon>Burkholderia cepacia complex</taxon>
    </lineage>
</organism>
<evidence type="ECO:0000255" key="1">
    <source>
        <dbReference type="HAMAP-Rule" id="MF_00600"/>
    </source>
</evidence>
<evidence type="ECO:0000256" key="2">
    <source>
        <dbReference type="SAM" id="MobiDB-lite"/>
    </source>
</evidence>
<keyword id="KW-0067">ATP-binding</keyword>
<keyword id="KW-0143">Chaperone</keyword>
<keyword id="KW-0963">Cytoplasm</keyword>
<keyword id="KW-0413">Isomerase</keyword>
<keyword id="KW-0547">Nucleotide-binding</keyword>
<accession>Q9ZFD8</accession>
<feature type="chain" id="PRO_0000063321" description="Chaperonin GroEL">
    <location>
        <begin position="1"/>
        <end position="546"/>
    </location>
</feature>
<feature type="region of interest" description="Disordered" evidence="2">
    <location>
        <begin position="526"/>
        <end position="546"/>
    </location>
</feature>
<feature type="compositionally biased region" description="Gly residues" evidence="2">
    <location>
        <begin position="534"/>
        <end position="546"/>
    </location>
</feature>
<feature type="binding site" evidence="1">
    <location>
        <begin position="30"/>
        <end position="33"/>
    </location>
    <ligand>
        <name>ATP</name>
        <dbReference type="ChEBI" id="CHEBI:30616"/>
    </ligand>
</feature>
<feature type="binding site" evidence="1">
    <location>
        <position position="51"/>
    </location>
    <ligand>
        <name>ATP</name>
        <dbReference type="ChEBI" id="CHEBI:30616"/>
    </ligand>
</feature>
<feature type="binding site" evidence="1">
    <location>
        <begin position="87"/>
        <end position="91"/>
    </location>
    <ligand>
        <name>ATP</name>
        <dbReference type="ChEBI" id="CHEBI:30616"/>
    </ligand>
</feature>
<feature type="binding site" evidence="1">
    <location>
        <position position="415"/>
    </location>
    <ligand>
        <name>ATP</name>
        <dbReference type="ChEBI" id="CHEBI:30616"/>
    </ligand>
</feature>
<feature type="binding site" evidence="1">
    <location>
        <begin position="479"/>
        <end position="481"/>
    </location>
    <ligand>
        <name>ATP</name>
        <dbReference type="ChEBI" id="CHEBI:30616"/>
    </ligand>
</feature>
<feature type="binding site" evidence="1">
    <location>
        <position position="495"/>
    </location>
    <ligand>
        <name>ATP</name>
        <dbReference type="ChEBI" id="CHEBI:30616"/>
    </ligand>
</feature>
<proteinExistence type="inferred from homology"/>
<comment type="function">
    <text evidence="1">Together with its co-chaperonin GroES, plays an essential role in assisting protein folding. The GroEL-GroES system forms a nano-cage that allows encapsulation of the non-native substrate proteins and provides a physical environment optimized to promote and accelerate protein folding.</text>
</comment>
<comment type="catalytic activity">
    <reaction evidence="1">
        <text>ATP + H2O + a folded polypeptide = ADP + phosphate + an unfolded polypeptide.</text>
        <dbReference type="EC" id="5.6.1.7"/>
    </reaction>
</comment>
<comment type="subunit">
    <text evidence="1">Forms a cylinder of 14 subunits composed of two heptameric rings stacked back-to-back. Interacts with the co-chaperonin GroES.</text>
</comment>
<comment type="subcellular location">
    <subcellularLocation>
        <location evidence="1">Cytoplasm</location>
    </subcellularLocation>
</comment>
<comment type="similarity">
    <text evidence="1">Belongs to the chaperonin (HSP60) family.</text>
</comment>
<reference key="1">
    <citation type="submission" date="1998-11" db="EMBL/GenBank/DDBJ databases">
        <title>Nucleotide sequence comparison of the groE operon of Burkholderia spp.</title>
        <authorList>
            <person name="Zysk G."/>
            <person name="Splettstoesser W.D."/>
            <person name="Neubauer H."/>
        </authorList>
    </citation>
    <scope>NUCLEOTIDE SEQUENCE [GENOMIC DNA]</scope>
    <source>
        <strain>ATCC BAA-248 / DSM 11319 / CCUG 34169 / JCM 10562 / KCTC 2974 / LMG 10929 / TVV75</strain>
    </source>
</reference>
<dbReference type="EC" id="5.6.1.7" evidence="1"/>
<dbReference type="EMBL" id="AF104908">
    <property type="protein sequence ID" value="AAC79089.1"/>
    <property type="molecule type" value="Genomic_DNA"/>
</dbReference>
<dbReference type="RefSeq" id="WP_011883504.1">
    <property type="nucleotide sequence ID" value="NZ_UZVT01000001.1"/>
</dbReference>
<dbReference type="SMR" id="Q9ZFD8"/>
<dbReference type="GeneID" id="45680056"/>
<dbReference type="OMA" id="PYILIHQ"/>
<dbReference type="GO" id="GO:0005737">
    <property type="term" value="C:cytoplasm"/>
    <property type="evidence" value="ECO:0007669"/>
    <property type="project" value="UniProtKB-SubCell"/>
</dbReference>
<dbReference type="GO" id="GO:0005524">
    <property type="term" value="F:ATP binding"/>
    <property type="evidence" value="ECO:0007669"/>
    <property type="project" value="UniProtKB-UniRule"/>
</dbReference>
<dbReference type="GO" id="GO:0140662">
    <property type="term" value="F:ATP-dependent protein folding chaperone"/>
    <property type="evidence" value="ECO:0007669"/>
    <property type="project" value="InterPro"/>
</dbReference>
<dbReference type="GO" id="GO:0016853">
    <property type="term" value="F:isomerase activity"/>
    <property type="evidence" value="ECO:0007669"/>
    <property type="project" value="UniProtKB-KW"/>
</dbReference>
<dbReference type="GO" id="GO:0051082">
    <property type="term" value="F:unfolded protein binding"/>
    <property type="evidence" value="ECO:0007669"/>
    <property type="project" value="UniProtKB-UniRule"/>
</dbReference>
<dbReference type="GO" id="GO:0042026">
    <property type="term" value="P:protein refolding"/>
    <property type="evidence" value="ECO:0007669"/>
    <property type="project" value="UniProtKB-UniRule"/>
</dbReference>
<dbReference type="CDD" id="cd03344">
    <property type="entry name" value="GroEL"/>
    <property type="match status" value="1"/>
</dbReference>
<dbReference type="FunFam" id="1.10.560.10:FF:000001">
    <property type="entry name" value="60 kDa chaperonin"/>
    <property type="match status" value="1"/>
</dbReference>
<dbReference type="FunFam" id="3.50.7.10:FF:000001">
    <property type="entry name" value="60 kDa chaperonin"/>
    <property type="match status" value="1"/>
</dbReference>
<dbReference type="Gene3D" id="3.50.7.10">
    <property type="entry name" value="GroEL"/>
    <property type="match status" value="1"/>
</dbReference>
<dbReference type="Gene3D" id="1.10.560.10">
    <property type="entry name" value="GroEL-like equatorial domain"/>
    <property type="match status" value="1"/>
</dbReference>
<dbReference type="Gene3D" id="3.30.260.10">
    <property type="entry name" value="TCP-1-like chaperonin intermediate domain"/>
    <property type="match status" value="1"/>
</dbReference>
<dbReference type="HAMAP" id="MF_00600">
    <property type="entry name" value="CH60"/>
    <property type="match status" value="1"/>
</dbReference>
<dbReference type="InterPro" id="IPR018370">
    <property type="entry name" value="Chaperonin_Cpn60_CS"/>
</dbReference>
<dbReference type="InterPro" id="IPR001844">
    <property type="entry name" value="Cpn60/GroEL"/>
</dbReference>
<dbReference type="InterPro" id="IPR002423">
    <property type="entry name" value="Cpn60/GroEL/TCP-1"/>
</dbReference>
<dbReference type="InterPro" id="IPR027409">
    <property type="entry name" value="GroEL-like_apical_dom_sf"/>
</dbReference>
<dbReference type="InterPro" id="IPR027413">
    <property type="entry name" value="GROEL-like_equatorial_sf"/>
</dbReference>
<dbReference type="InterPro" id="IPR027410">
    <property type="entry name" value="TCP-1-like_intermed_sf"/>
</dbReference>
<dbReference type="NCBIfam" id="TIGR02348">
    <property type="entry name" value="GroEL"/>
    <property type="match status" value="1"/>
</dbReference>
<dbReference type="NCBIfam" id="NF000592">
    <property type="entry name" value="PRK00013.1"/>
    <property type="match status" value="1"/>
</dbReference>
<dbReference type="NCBIfam" id="NF009487">
    <property type="entry name" value="PRK12849.1"/>
    <property type="match status" value="1"/>
</dbReference>
<dbReference type="NCBIfam" id="NF009488">
    <property type="entry name" value="PRK12850.1"/>
    <property type="match status" value="1"/>
</dbReference>
<dbReference type="NCBIfam" id="NF009489">
    <property type="entry name" value="PRK12851.1"/>
    <property type="match status" value="1"/>
</dbReference>
<dbReference type="PANTHER" id="PTHR45633">
    <property type="entry name" value="60 KDA HEAT SHOCK PROTEIN, MITOCHONDRIAL"/>
    <property type="match status" value="1"/>
</dbReference>
<dbReference type="Pfam" id="PF00118">
    <property type="entry name" value="Cpn60_TCP1"/>
    <property type="match status" value="1"/>
</dbReference>
<dbReference type="PRINTS" id="PR00298">
    <property type="entry name" value="CHAPERONIN60"/>
</dbReference>
<dbReference type="SUPFAM" id="SSF52029">
    <property type="entry name" value="GroEL apical domain-like"/>
    <property type="match status" value="1"/>
</dbReference>
<dbReference type="SUPFAM" id="SSF48592">
    <property type="entry name" value="GroEL equatorial domain-like"/>
    <property type="match status" value="1"/>
</dbReference>
<dbReference type="SUPFAM" id="SSF54849">
    <property type="entry name" value="GroEL-intermediate domain like"/>
    <property type="match status" value="1"/>
</dbReference>
<dbReference type="PROSITE" id="PS00296">
    <property type="entry name" value="CHAPERONINS_CPN60"/>
    <property type="match status" value="1"/>
</dbReference>
<sequence>MAAKDVVFGDSARSKMVEGVNILANAVKVTLGPKGRNVVLERSFGGPTVTKDGVSVAKEIELKDKLQNMGAQMVKEVASKTSDNAGDGTTTATVLAQSIVREGMKYVASGMNPMDLKRGIDKAVAAAVEELKKISKPCTTNKEIAQVGSISANSDSSIGDRIAEAMDKVGKEGVITVEDGKSLADELDVVEGMQFDRGYLSPYFINNPDKQVAVLDNPFVLLHDKKVSNIRDLLPVLEQVAKAGRPLLIIAEDVEGEALATLVVNNIRGILKTVAVKAPGFGDRRKAMLEDIAILTGGQVIAEETGLTLEKATLAELGQAKRIEVGKENTTIIDGAGEAASIEARVKQVRTQIEEATSDYDREKLQERVAKLAGGVAVIKVGAATEVEMKEKKARVEDALHATRAAVEEGIVAGGGVALIRARTAIAGLTGANADQNAGIKIVLRAMEEPLRQIVTNGGEEASVVVAAVAAGKGNYGYNAATGEYVDMVEAGVVDPTKVTRTALQNAASVAGLLLTTDAAVAELPKEDAPMPGGMPGGMGGMGMDM</sequence>
<name>CH60_BURVI</name>
<protein>
    <recommendedName>
        <fullName evidence="1">Chaperonin GroEL</fullName>
        <ecNumber evidence="1">5.6.1.7</ecNumber>
    </recommendedName>
    <alternativeName>
        <fullName evidence="1">60 kDa chaperonin</fullName>
    </alternativeName>
    <alternativeName>
        <fullName evidence="1">Chaperonin-60</fullName>
        <shortName evidence="1">Cpn60</shortName>
    </alternativeName>
</protein>
<gene>
    <name evidence="1" type="primary">groEL</name>
    <name evidence="1" type="synonym">groL</name>
    <name type="synonym">mopA</name>
</gene>